<protein>
    <recommendedName>
        <fullName evidence="1">Translational regulator CsrA</fullName>
    </recommendedName>
    <alternativeName>
        <fullName evidence="1">Carbon storage regulator</fullName>
    </alternativeName>
</protein>
<evidence type="ECO:0000255" key="1">
    <source>
        <dbReference type="HAMAP-Rule" id="MF_00167"/>
    </source>
</evidence>
<feature type="chain" id="PRO_1000118235" description="Translational regulator CsrA">
    <location>
        <begin position="1"/>
        <end position="61"/>
    </location>
</feature>
<gene>
    <name evidence="1" type="primary">csrA</name>
    <name type="ordered locus">ECIAI39_2881</name>
</gene>
<reference key="1">
    <citation type="journal article" date="2009" name="PLoS Genet.">
        <title>Organised genome dynamics in the Escherichia coli species results in highly diverse adaptive paths.</title>
        <authorList>
            <person name="Touchon M."/>
            <person name="Hoede C."/>
            <person name="Tenaillon O."/>
            <person name="Barbe V."/>
            <person name="Baeriswyl S."/>
            <person name="Bidet P."/>
            <person name="Bingen E."/>
            <person name="Bonacorsi S."/>
            <person name="Bouchier C."/>
            <person name="Bouvet O."/>
            <person name="Calteau A."/>
            <person name="Chiapello H."/>
            <person name="Clermont O."/>
            <person name="Cruveiller S."/>
            <person name="Danchin A."/>
            <person name="Diard M."/>
            <person name="Dossat C."/>
            <person name="Karoui M.E."/>
            <person name="Frapy E."/>
            <person name="Garry L."/>
            <person name="Ghigo J.M."/>
            <person name="Gilles A.M."/>
            <person name="Johnson J."/>
            <person name="Le Bouguenec C."/>
            <person name="Lescat M."/>
            <person name="Mangenot S."/>
            <person name="Martinez-Jehanne V."/>
            <person name="Matic I."/>
            <person name="Nassif X."/>
            <person name="Oztas S."/>
            <person name="Petit M.A."/>
            <person name="Pichon C."/>
            <person name="Rouy Z."/>
            <person name="Ruf C.S."/>
            <person name="Schneider D."/>
            <person name="Tourret J."/>
            <person name="Vacherie B."/>
            <person name="Vallenet D."/>
            <person name="Medigue C."/>
            <person name="Rocha E.P.C."/>
            <person name="Denamur E."/>
        </authorList>
    </citation>
    <scope>NUCLEOTIDE SEQUENCE [LARGE SCALE GENOMIC DNA]</scope>
    <source>
        <strain>IAI39 / ExPEC</strain>
    </source>
</reference>
<organism>
    <name type="scientific">Escherichia coli O7:K1 (strain IAI39 / ExPEC)</name>
    <dbReference type="NCBI Taxonomy" id="585057"/>
    <lineage>
        <taxon>Bacteria</taxon>
        <taxon>Pseudomonadati</taxon>
        <taxon>Pseudomonadota</taxon>
        <taxon>Gammaproteobacteria</taxon>
        <taxon>Enterobacterales</taxon>
        <taxon>Enterobacteriaceae</taxon>
        <taxon>Escherichia</taxon>
    </lineage>
</organism>
<dbReference type="EMBL" id="CU928164">
    <property type="protein sequence ID" value="CAR19003.1"/>
    <property type="molecule type" value="Genomic_DNA"/>
</dbReference>
<dbReference type="RefSeq" id="WP_000906486.1">
    <property type="nucleotide sequence ID" value="NC_011750.1"/>
</dbReference>
<dbReference type="RefSeq" id="YP_002408815.1">
    <property type="nucleotide sequence ID" value="NC_011750.1"/>
</dbReference>
<dbReference type="SMR" id="B7NSH6"/>
<dbReference type="STRING" id="585057.ECIAI39_2881"/>
<dbReference type="GeneID" id="98389839"/>
<dbReference type="KEGG" id="ect:ECIAI39_2881"/>
<dbReference type="PATRIC" id="fig|585057.6.peg.2989"/>
<dbReference type="HOGENOM" id="CLU_164837_2_1_6"/>
<dbReference type="PRO" id="PR:B7NSH6"/>
<dbReference type="Proteomes" id="UP000000749">
    <property type="component" value="Chromosome"/>
</dbReference>
<dbReference type="GO" id="GO:0005829">
    <property type="term" value="C:cytosol"/>
    <property type="evidence" value="ECO:0007669"/>
    <property type="project" value="TreeGrafter"/>
</dbReference>
<dbReference type="GO" id="GO:0048027">
    <property type="term" value="F:mRNA 5'-UTR binding"/>
    <property type="evidence" value="ECO:0007669"/>
    <property type="project" value="UniProtKB-UniRule"/>
</dbReference>
<dbReference type="GO" id="GO:0006402">
    <property type="term" value="P:mRNA catabolic process"/>
    <property type="evidence" value="ECO:0007669"/>
    <property type="project" value="InterPro"/>
</dbReference>
<dbReference type="GO" id="GO:0045947">
    <property type="term" value="P:negative regulation of translational initiation"/>
    <property type="evidence" value="ECO:0007669"/>
    <property type="project" value="UniProtKB-UniRule"/>
</dbReference>
<dbReference type="GO" id="GO:0045948">
    <property type="term" value="P:positive regulation of translational initiation"/>
    <property type="evidence" value="ECO:0007669"/>
    <property type="project" value="UniProtKB-UniRule"/>
</dbReference>
<dbReference type="GO" id="GO:0006109">
    <property type="term" value="P:regulation of carbohydrate metabolic process"/>
    <property type="evidence" value="ECO:0007669"/>
    <property type="project" value="UniProtKB-UniRule"/>
</dbReference>
<dbReference type="FunFam" id="2.60.40.4380:FF:000001">
    <property type="entry name" value="Translational regulator CsrA"/>
    <property type="match status" value="1"/>
</dbReference>
<dbReference type="Gene3D" id="2.60.40.4380">
    <property type="entry name" value="Translational regulator CsrA"/>
    <property type="match status" value="1"/>
</dbReference>
<dbReference type="HAMAP" id="MF_00167">
    <property type="entry name" value="CsrA"/>
    <property type="match status" value="1"/>
</dbReference>
<dbReference type="InterPro" id="IPR003751">
    <property type="entry name" value="CsrA"/>
</dbReference>
<dbReference type="InterPro" id="IPR036107">
    <property type="entry name" value="CsrA_sf"/>
</dbReference>
<dbReference type="NCBIfam" id="TIGR00202">
    <property type="entry name" value="csrA"/>
    <property type="match status" value="1"/>
</dbReference>
<dbReference type="NCBIfam" id="NF002469">
    <property type="entry name" value="PRK01712.1"/>
    <property type="match status" value="1"/>
</dbReference>
<dbReference type="PANTHER" id="PTHR34984">
    <property type="entry name" value="CARBON STORAGE REGULATOR"/>
    <property type="match status" value="1"/>
</dbReference>
<dbReference type="PANTHER" id="PTHR34984:SF1">
    <property type="entry name" value="CARBON STORAGE REGULATOR"/>
    <property type="match status" value="1"/>
</dbReference>
<dbReference type="Pfam" id="PF02599">
    <property type="entry name" value="CsrA"/>
    <property type="match status" value="1"/>
</dbReference>
<dbReference type="SUPFAM" id="SSF117130">
    <property type="entry name" value="CsrA-like"/>
    <property type="match status" value="1"/>
</dbReference>
<keyword id="KW-0010">Activator</keyword>
<keyword id="KW-0963">Cytoplasm</keyword>
<keyword id="KW-0678">Repressor</keyword>
<keyword id="KW-0694">RNA-binding</keyword>
<keyword id="KW-0810">Translation regulation</keyword>
<name>CSRA_ECO7I</name>
<comment type="function">
    <text evidence="1">A key translational regulator that binds mRNA to regulate translation initiation and/or mRNA stability. Mediates global changes in gene expression, shifting from rapid growth to stress survival by linking envelope stress, the stringent response and the catabolite repression systems. Usually binds in the 5'-UTR; binding at or near the Shine-Dalgarno sequence prevents ribosome-binding, repressing translation, binding elsewhere in the 5'-UTR can activate translation and/or stabilize the mRNA. Its function is antagonized by small RNA(s).</text>
</comment>
<comment type="subunit">
    <text evidence="1">Homodimer; the beta-strands of each monomer intercalate to form a hydrophobic core, while the alpha-helices form wings that extend away from the core.</text>
</comment>
<comment type="subcellular location">
    <subcellularLocation>
        <location evidence="1">Cytoplasm</location>
    </subcellularLocation>
</comment>
<comment type="similarity">
    <text evidence="1">Belongs to the CsrA/RsmA family.</text>
</comment>
<proteinExistence type="inferred from homology"/>
<accession>B7NSH6</accession>
<sequence>MLILTRRVGETLMIGDEVTVTVLGVKGNQVRIGVNAPKEVSVHREEIYQRIQAEKSQQSSY</sequence>